<feature type="chain" id="PRO_0000166678" description="Phosphoenolpyruvate carboxylase 3">
    <location>
        <begin position="1"/>
        <end position="960"/>
    </location>
</feature>
<feature type="active site" evidence="1">
    <location>
        <position position="167"/>
    </location>
</feature>
<feature type="active site" evidence="1">
    <location>
        <position position="597"/>
    </location>
</feature>
<feature type="modified residue" description="Phosphoserine" evidence="2">
    <location>
        <position position="8"/>
    </location>
</feature>
<proteinExistence type="evidence at protein level"/>
<reference key="1">
    <citation type="journal article" date="1990" name="Nucleic Acids Res.">
        <title>Complete cDNA sequence of sorghum phosphoenolpyruvate carboxylase involved in C4 photosynthesis.</title>
        <authorList>
            <person name="Cretin C."/>
            <person name="Keryer E."/>
            <person name="Tagu D."/>
            <person name="Lepiniec L."/>
            <person name="Vidal J."/>
            <person name="Gadal P."/>
        </authorList>
    </citation>
    <scope>NUCLEOTIDE SEQUENCE [MRNA]</scope>
    <source>
        <strain>cv. Tamaran FNK 140</strain>
        <tissue>Leaf</tissue>
    </source>
</reference>
<reference key="2">
    <citation type="journal article" date="1991" name="Gene">
        <title>The phosphoenolpyruvate carboxylase gene family of Sorghum: promoter structures, amino acid sequences and expression of genes.</title>
        <authorList>
            <person name="Cretin C."/>
            <person name="Santi S."/>
            <person name="Keryer E."/>
            <person name="Lepiniec L."/>
            <person name="Tagu D."/>
            <person name="Vidal J."/>
            <person name="Gadal P."/>
        </authorList>
    </citation>
    <scope>NUCLEOTIDE SEQUENCE</scope>
    <scope>SEQUENCE REVISION</scope>
</reference>
<reference key="3">
    <citation type="journal article" date="1992" name="Plant Mol. Biol.">
        <title>Complete nucleotide sequence of a sorghum gene coding for the phosphoenolpyruvate carboxylase involved in C4 photosynthesis.</title>
        <authorList>
            <person name="Lepiniec L."/>
            <person name="Keryer E."/>
            <person name="Tagu D."/>
            <person name="Gadal P."/>
            <person name="Cretin C."/>
        </authorList>
    </citation>
    <scope>NUCLEOTIDE SEQUENCE</scope>
    <scope>SEQUENCE REVISION</scope>
    <source>
        <tissue>Root</tissue>
    </source>
</reference>
<reference key="4">
    <citation type="journal article" date="1993" name="Plant Mol. Biol.">
        <title>Sorghum phosphoenolpyruvate carboxylase gene family: structure, function and molecular evolution.</title>
        <authorList>
            <person name="Lepiniec L."/>
            <person name="Keryer E."/>
            <person name="Philippe H."/>
            <person name="Gadal P."/>
            <person name="Cretin C."/>
        </authorList>
    </citation>
    <scope>NUCLEOTIDE SEQUENCE [GENOMIC DNA]</scope>
</reference>
<reference key="5">
    <citation type="journal article" date="1991" name="Plant Physiol.">
        <title>In vivo regulatory phosphorylation site in C4-leaf phosphoenolpyruvate carboxylase from maize and sorghum.</title>
        <authorList>
            <person name="Jiao J.-A."/>
            <person name="Vidal J."/>
            <person name="Echevarria C."/>
            <person name="Chollet R."/>
        </authorList>
    </citation>
    <scope>PHOSPHORYLATION AT SER-8</scope>
</reference>
<protein>
    <recommendedName>
        <fullName>Phosphoenolpyruvate carboxylase 3</fullName>
        <shortName>PEPC 3</shortName>
        <shortName>PEPCase 3</shortName>
        <ecNumber>4.1.1.31</ecNumber>
    </recommendedName>
    <alternativeName>
        <fullName>CP46</fullName>
    </alternativeName>
</protein>
<sequence>MASERHHSIDAQLRALAPGKVSEELIQYDALLVDRFLDILQDLHGPSLREFVQECYEVSADYEGKKDTSKLGELGAKLTGLAPADAILVASSILHMLNLANLAEEVELAHRRRNSKLKHGDFSDEGSATTESDIEETLKRLVSLGKTPAEVFEALKNQSVDLVFTAHPTQSARRSLLQKNARIRNCLTQLSAKDVTVEDKKELDEALHREIQAAFRTDEIRRAQPTPQDEMRYGMSYIHETVWNGVPKFLRRVDTALKNIGINERLPYDVPLIKFCSWMGGDRDGNPRVTPEVTRDVCLLSRMMAANLYINQVEDLMFELSMWRCNDELRARAEEVQSTPASKKVTKYYIEFWKQIPPNEPYRVILGAVRDKLYNTRERARHLLATGFSEISEDAVFTKIEEFLEPLELCYKSLCECGDKAIADGSLLDLLRQVFTFGLSLVKLDIRQESERQTDVIDAITTHLGIGSYRSWPEDKRMEWLVSELKGKRPLLPPDLPMTEEIADVIGAMRVLAELPIDSFGPYIISMCTAPSDVLAVELLQRECGIRQTLPVVPLFERLADLQAAPASVEKLFSTDWYINHINGKQQVMVGYSDSGKDAGRLSAAWQLYVAQEEMAKVAKKYGVKLTLFHGRGGTVGRGGGPTHLAILSQPPDTINGSIRVTVQGEVIEFMFGEENLCFQSLQRFTAATLEHGMHPPVSPKPEWRKLMEEMAVVATEEYRSVVVKEPRFVEYFRSATPETEYGKMNIGSRPAKRRPGGGITTLRAIPWIFSWTQTRFHLPVWLGVGAAFKWAIDKDIKNFQKLKEMYNEWPFFRVTLDLLEMVFAKGDPGIAGLYDELLVAEELKPFGKQLRDKYVETQQLLLQIAGHKDILEGDPYLKQGLRLRNPYITTLNVFQAYTLKRIRDPSFKVTPQPPLSKEFADENKPAGLVKLNGERVPPGLEDTLILTMKGIAAGMQNTG</sequence>
<comment type="function">
    <text>Through the carboxylation of phosphoenolpyruvate (PEP) it forms oxaloacetate, a four-carbon dicarboxylic acid source for the tricarboxylic acid cycle.</text>
</comment>
<comment type="catalytic activity">
    <reaction>
        <text>oxaloacetate + phosphate = phosphoenolpyruvate + hydrogencarbonate</text>
        <dbReference type="Rhea" id="RHEA:28370"/>
        <dbReference type="ChEBI" id="CHEBI:16452"/>
        <dbReference type="ChEBI" id="CHEBI:17544"/>
        <dbReference type="ChEBI" id="CHEBI:43474"/>
        <dbReference type="ChEBI" id="CHEBI:58702"/>
        <dbReference type="EC" id="4.1.1.31"/>
    </reaction>
</comment>
<comment type="cofactor">
    <cofactor evidence="1">
        <name>Mg(2+)</name>
        <dbReference type="ChEBI" id="CHEBI:18420"/>
    </cofactor>
</comment>
<comment type="activity regulation">
    <text>By light-reversible phosphorylation.</text>
</comment>
<comment type="pathway">
    <text>Photosynthesis; C4 acid pathway.</text>
</comment>
<comment type="subunit">
    <text>Homotetramer.</text>
</comment>
<comment type="subcellular location">
    <subcellularLocation>
        <location>Cytoplasm</location>
    </subcellularLocation>
</comment>
<comment type="similarity">
    <text evidence="3">Belongs to the PEPCase type 1 family.</text>
</comment>
<dbReference type="EC" id="4.1.1.31"/>
<dbReference type="EMBL" id="X17379">
    <property type="protein sequence ID" value="CAA35251.2"/>
    <property type="molecule type" value="mRNA"/>
</dbReference>
<dbReference type="EMBL" id="X63756">
    <property type="protein sequence ID" value="CAA45284.1"/>
    <property type="molecule type" value="Genomic_DNA"/>
</dbReference>
<dbReference type="PIR" id="S08216">
    <property type="entry name" value="QYMG"/>
</dbReference>
<dbReference type="PIR" id="S22507">
    <property type="entry name" value="S22507"/>
</dbReference>
<dbReference type="SMR" id="P15804"/>
<dbReference type="iPTMnet" id="P15804"/>
<dbReference type="eggNOG" id="ENOG502QPVS">
    <property type="taxonomic scope" value="Eukaryota"/>
</dbReference>
<dbReference type="BRENDA" id="4.1.1.31">
    <property type="organism ID" value="5768"/>
</dbReference>
<dbReference type="SABIO-RK" id="P15804"/>
<dbReference type="UniPathway" id="UPA00322"/>
<dbReference type="ExpressionAtlas" id="P15804">
    <property type="expression patterns" value="baseline and differential"/>
</dbReference>
<dbReference type="GO" id="GO:0005737">
    <property type="term" value="C:cytoplasm"/>
    <property type="evidence" value="ECO:0007669"/>
    <property type="project" value="UniProtKB-SubCell"/>
</dbReference>
<dbReference type="GO" id="GO:0008964">
    <property type="term" value="F:phosphoenolpyruvate carboxylase activity"/>
    <property type="evidence" value="ECO:0007669"/>
    <property type="project" value="UniProtKB-EC"/>
</dbReference>
<dbReference type="GO" id="GO:0015977">
    <property type="term" value="P:carbon fixation"/>
    <property type="evidence" value="ECO:0007669"/>
    <property type="project" value="UniProtKB-KW"/>
</dbReference>
<dbReference type="GO" id="GO:0015979">
    <property type="term" value="P:photosynthesis"/>
    <property type="evidence" value="ECO:0007669"/>
    <property type="project" value="UniProtKB-KW"/>
</dbReference>
<dbReference type="GO" id="GO:0006099">
    <property type="term" value="P:tricarboxylic acid cycle"/>
    <property type="evidence" value="ECO:0007669"/>
    <property type="project" value="InterPro"/>
</dbReference>
<dbReference type="FunFam" id="1.20.1440.90:FF:000001">
    <property type="entry name" value="Phosphoenolpyruvate carboxylase 1"/>
    <property type="match status" value="1"/>
</dbReference>
<dbReference type="Gene3D" id="1.20.1440.90">
    <property type="entry name" value="Phosphoenolpyruvate/pyruvate domain"/>
    <property type="match status" value="1"/>
</dbReference>
<dbReference type="HAMAP" id="MF_00595">
    <property type="entry name" value="PEPcase_type1"/>
    <property type="match status" value="1"/>
</dbReference>
<dbReference type="InterPro" id="IPR021135">
    <property type="entry name" value="PEP_COase"/>
</dbReference>
<dbReference type="InterPro" id="IPR022805">
    <property type="entry name" value="PEP_COase_bac/pln-type"/>
</dbReference>
<dbReference type="InterPro" id="IPR018129">
    <property type="entry name" value="PEP_COase_Lys_AS"/>
</dbReference>
<dbReference type="InterPro" id="IPR033129">
    <property type="entry name" value="PEPCASE_His_AS"/>
</dbReference>
<dbReference type="InterPro" id="IPR015813">
    <property type="entry name" value="Pyrv/PenolPyrv_kinase-like_dom"/>
</dbReference>
<dbReference type="NCBIfam" id="NF000584">
    <property type="entry name" value="PRK00009.1"/>
    <property type="match status" value="1"/>
</dbReference>
<dbReference type="PANTHER" id="PTHR30523">
    <property type="entry name" value="PHOSPHOENOLPYRUVATE CARBOXYLASE"/>
    <property type="match status" value="1"/>
</dbReference>
<dbReference type="PANTHER" id="PTHR30523:SF5">
    <property type="entry name" value="PHOSPHOENOLPYRUVATE CARBOXYLASE 1"/>
    <property type="match status" value="1"/>
</dbReference>
<dbReference type="Pfam" id="PF00311">
    <property type="entry name" value="PEPcase"/>
    <property type="match status" value="1"/>
</dbReference>
<dbReference type="PRINTS" id="PR00150">
    <property type="entry name" value="PEPCARBXLASE"/>
</dbReference>
<dbReference type="SUPFAM" id="SSF51621">
    <property type="entry name" value="Phosphoenolpyruvate/pyruvate domain"/>
    <property type="match status" value="1"/>
</dbReference>
<dbReference type="PROSITE" id="PS00781">
    <property type="entry name" value="PEPCASE_1"/>
    <property type="match status" value="1"/>
</dbReference>
<dbReference type="PROSITE" id="PS00393">
    <property type="entry name" value="PEPCASE_2"/>
    <property type="match status" value="1"/>
</dbReference>
<keyword id="KW-0021">Allosteric enzyme</keyword>
<keyword id="KW-0120">Carbon dioxide fixation</keyword>
<keyword id="KW-0963">Cytoplasm</keyword>
<keyword id="KW-0456">Lyase</keyword>
<keyword id="KW-0460">Magnesium</keyword>
<keyword id="KW-0597">Phosphoprotein</keyword>
<keyword id="KW-0602">Photosynthesis</keyword>
<name>CAPP3_SORBI</name>
<accession>P15804</accession>
<organism>
    <name type="scientific">Sorghum bicolor</name>
    <name type="common">Sorghum</name>
    <name type="synonym">Sorghum vulgare</name>
    <dbReference type="NCBI Taxonomy" id="4558"/>
    <lineage>
        <taxon>Eukaryota</taxon>
        <taxon>Viridiplantae</taxon>
        <taxon>Streptophyta</taxon>
        <taxon>Embryophyta</taxon>
        <taxon>Tracheophyta</taxon>
        <taxon>Spermatophyta</taxon>
        <taxon>Magnoliopsida</taxon>
        <taxon>Liliopsida</taxon>
        <taxon>Poales</taxon>
        <taxon>Poaceae</taxon>
        <taxon>PACMAD clade</taxon>
        <taxon>Panicoideae</taxon>
        <taxon>Andropogonodae</taxon>
        <taxon>Andropogoneae</taxon>
        <taxon>Sorghinae</taxon>
        <taxon>Sorghum</taxon>
    </lineage>
</organism>
<evidence type="ECO:0000250" key="1"/>
<evidence type="ECO:0000269" key="2">
    <source>
    </source>
</evidence>
<evidence type="ECO:0000305" key="3"/>